<gene>
    <name type="primary">Sgms1</name>
    <name type="synonym">Tmem23</name>
</gene>
<feature type="chain" id="PRO_0000221069" description="Phosphatidylcholine:ceramide cholinephosphotransferase 1">
    <location>
        <begin position="1"/>
        <end position="419"/>
    </location>
</feature>
<feature type="transmembrane region" description="Helical" evidence="2">
    <location>
        <begin position="142"/>
        <end position="162"/>
    </location>
</feature>
<feature type="transmembrane region" description="Helical" evidence="2">
    <location>
        <begin position="190"/>
        <end position="210"/>
    </location>
</feature>
<feature type="transmembrane region" description="Helical" evidence="2">
    <location>
        <begin position="221"/>
        <end position="241"/>
    </location>
</feature>
<feature type="transmembrane region" description="Helical" evidence="2">
    <location>
        <begin position="282"/>
        <end position="302"/>
    </location>
</feature>
<feature type="transmembrane region" description="Helical" evidence="2">
    <location>
        <begin position="310"/>
        <end position="330"/>
    </location>
</feature>
<feature type="topological domain" description="Cytoplasmic" evidence="2">
    <location>
        <begin position="331"/>
        <end position="419"/>
    </location>
</feature>
<feature type="domain" description="SAM" evidence="3 13">
    <location>
        <begin position="13"/>
        <end position="76"/>
    </location>
</feature>
<feature type="active site" evidence="1">
    <location>
        <position position="291"/>
    </location>
</feature>
<feature type="active site" evidence="1">
    <location>
        <position position="334"/>
    </location>
</feature>
<feature type="active site" evidence="1">
    <location>
        <position position="338"/>
    </location>
</feature>
<feature type="modified residue" description="Phosphoserine" evidence="1">
    <location>
        <position position="14"/>
    </location>
</feature>
<feature type="splice variant" id="VSP_050673" description="In isoform 2." evidence="11 12">
    <location>
        <begin position="215"/>
        <end position="419"/>
    </location>
</feature>
<feature type="splice variant" id="VSP_027225" description="In isoform 3." evidence="11 12">
    <original>SII</original>
    <variation>LSP</variation>
    <location>
        <begin position="215"/>
        <end position="217"/>
    </location>
</feature>
<feature type="splice variant" id="VSP_027226" description="In isoform 3." evidence="11 12">
    <location>
        <begin position="218"/>
        <end position="419"/>
    </location>
</feature>
<feature type="sequence conflict" description="In Ref. 2; BAC37590." evidence="13" ref="2">
    <original>S</original>
    <variation>Y</variation>
    <location>
        <position position="132"/>
    </location>
</feature>
<feature type="sequence conflict" description="In Ref. 2; BAE27428." evidence="13" ref="2">
    <original>L</original>
    <variation>I</variation>
    <location>
        <position position="406"/>
    </location>
</feature>
<feature type="helix" evidence="15">
    <location>
        <begin position="17"/>
        <end position="24"/>
    </location>
</feature>
<feature type="turn" evidence="15">
    <location>
        <begin position="28"/>
        <end position="36"/>
    </location>
</feature>
<feature type="helix" evidence="15">
    <location>
        <begin position="39"/>
        <end position="43"/>
    </location>
</feature>
<feature type="helix" evidence="15">
    <location>
        <begin position="47"/>
        <end position="51"/>
    </location>
</feature>
<feature type="strand" evidence="15">
    <location>
        <begin position="52"/>
        <end position="57"/>
    </location>
</feature>
<feature type="turn" evidence="15">
    <location>
        <begin position="60"/>
        <end position="63"/>
    </location>
</feature>
<feature type="helix" evidence="15">
    <location>
        <begin position="64"/>
        <end position="76"/>
    </location>
</feature>
<proteinExistence type="evidence at protein level"/>
<comment type="function">
    <text evidence="1 6 7 9">Major sphingomyelin synthase at the Golgi apparatus. Catalyzes the reversible transfer of phosphocholine moiety in sphingomyelin biosynthesis: in the forward reaction transfers phosphocholine head group of phosphatidylcholine (PC) on to ceramide (CER) to form ceramide phosphocholine (sphingomyelin, SM) and diacylglycerol (DAG) as by-product, and in the reverse reaction transfers phosphocholine from SM to DAG to form PC and CER. The direction of the reaction depends on the levels of CER and DAG in Golgi membranes. Converts the newly synthesized CER, that is transported from the endoplasmic reticulum to the trans-Golgi by the Cer transport protein (CERT), to SM. Can form a heteromeric complex with glucosylceramide synthase (GCS) increasing SMS activity and reducing glucosylceramide synthesis, a critical mechanism that controls the metabolic fate of CER in the Golgi (By similarity). Does not use free phosphorylcholine or CDP-choline as donor. Can also transfer phosphoethanolamine head group of phosphatidylethanolamine (PE) on to CER to form ceramide phosphoethanolamine (CPE) (PubMed:25605874). Regulates receptor-mediated signal transduction via mitogenic DAG and proapoptotic CER, as well as via SM, a structural component of membrane rafts that serve as platforms for signal transduction and protein sorting (PubMed:16879426, PubMed:22580896). Plays a role in secretory transport via regulation of DAG pool at the Golgi apparatus and its downstream effects on PRKD1 (By similarity).</text>
</comment>
<comment type="function">
    <text evidence="10">(Microbial infection) Contributes to the brain SM production for Japanese encephalitis virus attachment and infection.</text>
</comment>
<comment type="catalytic activity">
    <reaction evidence="10">
        <text>an N-acylsphing-4-enine + a 1,2-diacyl-sn-glycero-3-phosphocholine = a sphingomyelin + a 1,2-diacyl-sn-glycerol</text>
        <dbReference type="Rhea" id="RHEA:18765"/>
        <dbReference type="ChEBI" id="CHEBI:17636"/>
        <dbReference type="ChEBI" id="CHEBI:17815"/>
        <dbReference type="ChEBI" id="CHEBI:52639"/>
        <dbReference type="ChEBI" id="CHEBI:57643"/>
        <dbReference type="EC" id="2.7.8.27"/>
    </reaction>
    <physiologicalReaction direction="left-to-right" evidence="14">
        <dbReference type="Rhea" id="RHEA:18766"/>
    </physiologicalReaction>
    <physiologicalReaction direction="right-to-left" evidence="1">
        <dbReference type="Rhea" id="RHEA:18767"/>
    </physiologicalReaction>
</comment>
<comment type="catalytic activity">
    <reaction evidence="1">
        <text>1-(9Z-octadecenoyl)-2-acyl-sn-3-glycerol + a sphingomyelin = a 1-(9Z-octadecenoyl)-2-acyl-sn-glycero-3-phosphocholine + an N-acylsphing-4-enine</text>
        <dbReference type="Rhea" id="RHEA:43320"/>
        <dbReference type="ChEBI" id="CHEBI:17636"/>
        <dbReference type="ChEBI" id="CHEBI:52639"/>
        <dbReference type="ChEBI" id="CHEBI:78421"/>
        <dbReference type="ChEBI" id="CHEBI:82983"/>
    </reaction>
    <physiologicalReaction direction="left-to-right" evidence="1">
        <dbReference type="Rhea" id="RHEA:43321"/>
    </physiologicalReaction>
    <physiologicalReaction direction="right-to-left" evidence="1">
        <dbReference type="Rhea" id="RHEA:43322"/>
    </physiologicalReaction>
</comment>
<comment type="catalytic activity">
    <reaction evidence="1">
        <text>N-hexadecanoylsphinganine + a 1,2-diacyl-sn-glycero-3-phosphocholine = N-hexadecanoyl-sphinganine-1-phosphocholine + a 1,2-diacyl-sn-glycerol</text>
        <dbReference type="Rhea" id="RHEA:41796"/>
        <dbReference type="ChEBI" id="CHEBI:17815"/>
        <dbReference type="ChEBI" id="CHEBI:57643"/>
        <dbReference type="ChEBI" id="CHEBI:67042"/>
        <dbReference type="ChEBI" id="CHEBI:78647"/>
    </reaction>
    <physiologicalReaction direction="left-to-right" evidence="1">
        <dbReference type="Rhea" id="RHEA:41797"/>
    </physiologicalReaction>
    <physiologicalReaction direction="right-to-left" evidence="1">
        <dbReference type="Rhea" id="RHEA:41798"/>
    </physiologicalReaction>
</comment>
<comment type="catalytic activity">
    <reaction evidence="1">
        <text>N-hexadecanoyl-(4R)-hydroxysphinganine + a 1,2-diacyl-sn-glycero-3-phosphocholine = N-hexadecanoyl-(4R)-hydroxysphinganine-phosphocholine + a 1,2-diacyl-sn-glycerol</text>
        <dbReference type="Rhea" id="RHEA:42140"/>
        <dbReference type="ChEBI" id="CHEBI:17815"/>
        <dbReference type="ChEBI" id="CHEBI:57643"/>
        <dbReference type="ChEBI" id="CHEBI:65107"/>
        <dbReference type="ChEBI" id="CHEBI:78650"/>
    </reaction>
    <physiologicalReaction direction="left-to-right" evidence="1">
        <dbReference type="Rhea" id="RHEA:42141"/>
    </physiologicalReaction>
    <physiologicalReaction direction="right-to-left" evidence="1">
        <dbReference type="Rhea" id="RHEA:42142"/>
    </physiologicalReaction>
</comment>
<comment type="catalytic activity">
    <reaction evidence="9">
        <text>an N-acylsphing-4-enine + a 1,2-diacyl-sn-glycero-3-phosphoethanolamine = an N-acylsphing-4-enine 1-phosphoethanolamine + a 1,2-diacyl-sn-glycerol</text>
        <dbReference type="Rhea" id="RHEA:36079"/>
        <dbReference type="ChEBI" id="CHEBI:17815"/>
        <dbReference type="ChEBI" id="CHEBI:52639"/>
        <dbReference type="ChEBI" id="CHEBI:64612"/>
        <dbReference type="ChEBI" id="CHEBI:73203"/>
    </reaction>
    <physiologicalReaction direction="left-to-right" evidence="9">
        <dbReference type="Rhea" id="RHEA:36080"/>
    </physiologicalReaction>
</comment>
<comment type="pathway">
    <text evidence="10">Sphingolipid metabolism.</text>
</comment>
<comment type="subcellular location">
    <subcellularLocation>
        <location evidence="1">Golgi apparatus membrane</location>
        <topology evidence="2">Multi-pass membrane protein</topology>
    </subcellularLocation>
</comment>
<comment type="alternative products">
    <event type="alternative splicing"/>
    <isoform>
        <id>Q8VCQ6-1</id>
        <name>1</name>
        <name>SMS1-alpha</name>
        <sequence type="displayed"/>
    </isoform>
    <isoform>
        <id>Q8VCQ6-2</id>
        <name>2</name>
        <name>SMS1-beta</name>
        <sequence type="described" ref="VSP_050673"/>
    </isoform>
    <isoform>
        <id>Q8VCQ6-3</id>
        <name>3</name>
        <name>SMS1-gamma</name>
        <sequence type="described" ref="VSP_027225 VSP_027226"/>
    </isoform>
</comment>
<comment type="tissue specificity">
    <text evidence="5">Isoform 1 is widely expressed, isoform 2 shows a more narrow distribution and isoform 3 is detected only in testis and heart.</text>
</comment>
<comment type="induction">
    <molecule>Isoform 1</molecule>
    <text evidence="5">Induced by TNF-alpha.</text>
</comment>
<comment type="induction">
    <molecule>Isoform 2</molecule>
    <text evidence="5">Induced by TNF-alpha.</text>
</comment>
<comment type="disruption phenotype">
    <text evidence="7 8">Null mice have hearing impairments with stria vascularis (SV) in these mice exhibiting atrophy and disorganized marginal cells resulting in significantly smaller endocochlear potentials (EPs). These decreased EPs, together with abnormal KCNQ1 expression patterns, increase with age. There is a decrease in plasma, liver, and macrophage sphingomyelin (59%, 45%, and 54%, respectively) and a dramatic increase in glycosphingolipids. No change in ceramide, total cholesterol, phospholipids nor triglycerides levels. Diminished macrophage MAP kinase and NFKB1 activation is observed. Atherosclerosis in SMS1(-/-)/LDLR(-/-) mice is significantly decreased.</text>
</comment>
<comment type="similarity">
    <text evidence="13">Belongs to the sphingomyelin synthase family.</text>
</comment>
<dbReference type="EC" id="2.7.8.27" evidence="10"/>
<dbReference type="EMBL" id="AY509044">
    <property type="protein sequence ID" value="AAS90514.1"/>
    <property type="molecule type" value="mRNA"/>
</dbReference>
<dbReference type="EMBL" id="AK076554">
    <property type="protein sequence ID" value="BAC36390.1"/>
    <property type="molecule type" value="mRNA"/>
</dbReference>
<dbReference type="EMBL" id="AK079254">
    <property type="protein sequence ID" value="BAC37590.1"/>
    <property type="molecule type" value="mRNA"/>
</dbReference>
<dbReference type="EMBL" id="AK082974">
    <property type="protein sequence ID" value="BAC38717.1"/>
    <property type="molecule type" value="mRNA"/>
</dbReference>
<dbReference type="EMBL" id="AK133967">
    <property type="protein sequence ID" value="BAE21960.1"/>
    <property type="molecule type" value="mRNA"/>
</dbReference>
<dbReference type="EMBL" id="AK146782">
    <property type="protein sequence ID" value="BAE27428.1"/>
    <property type="molecule type" value="mRNA"/>
</dbReference>
<dbReference type="EMBL" id="AK150272">
    <property type="protein sequence ID" value="BAE29428.1"/>
    <property type="molecule type" value="mRNA"/>
</dbReference>
<dbReference type="EMBL" id="AK151170">
    <property type="protein sequence ID" value="BAE30173.1"/>
    <property type="molecule type" value="mRNA"/>
</dbReference>
<dbReference type="EMBL" id="AK152312">
    <property type="protein sequence ID" value="BAE31117.1"/>
    <property type="molecule type" value="mRNA"/>
</dbReference>
<dbReference type="EMBL" id="AK153406">
    <property type="protein sequence ID" value="BAE31966.1"/>
    <property type="molecule type" value="mRNA"/>
</dbReference>
<dbReference type="EMBL" id="AK160539">
    <property type="protein sequence ID" value="BAE35856.1"/>
    <property type="molecule type" value="mRNA"/>
</dbReference>
<dbReference type="EMBL" id="BC019443">
    <property type="protein sequence ID" value="AAH19443.2"/>
    <property type="molecule type" value="mRNA"/>
</dbReference>
<dbReference type="EMBL" id="BC085298">
    <property type="protein sequence ID" value="AAH85298.1"/>
    <property type="molecule type" value="mRNA"/>
</dbReference>
<dbReference type="CCDS" id="CCDS29750.1">
    <molecule id="Q8VCQ6-1"/>
</dbReference>
<dbReference type="RefSeq" id="NP_001161997.1">
    <molecule id="Q8VCQ6-1"/>
    <property type="nucleotide sequence ID" value="NM_001168525.1"/>
</dbReference>
<dbReference type="RefSeq" id="NP_001161998.1">
    <molecule id="Q8VCQ6-1"/>
    <property type="nucleotide sequence ID" value="NM_001168526.1"/>
</dbReference>
<dbReference type="RefSeq" id="NP_001349352.1">
    <molecule id="Q8VCQ6-1"/>
    <property type="nucleotide sequence ID" value="NM_001362423.1"/>
</dbReference>
<dbReference type="RefSeq" id="NP_659041.3">
    <molecule id="Q8VCQ6-1"/>
    <property type="nucleotide sequence ID" value="NM_144792.4"/>
</dbReference>
<dbReference type="RefSeq" id="XP_006526881.1">
    <molecule id="Q8VCQ6-1"/>
    <property type="nucleotide sequence ID" value="XM_006526818.5"/>
</dbReference>
<dbReference type="RefSeq" id="XP_006526882.1">
    <molecule id="Q8VCQ6-1"/>
    <property type="nucleotide sequence ID" value="XM_006526819.3"/>
</dbReference>
<dbReference type="RefSeq" id="XP_006526883.1">
    <molecule id="Q8VCQ6-1"/>
    <property type="nucleotide sequence ID" value="XM_006526820.5"/>
</dbReference>
<dbReference type="RefSeq" id="XP_011245503.1">
    <property type="nucleotide sequence ID" value="XM_011247201.2"/>
</dbReference>
<dbReference type="RefSeq" id="XP_011245504.1">
    <molecule id="Q8VCQ6-1"/>
    <property type="nucleotide sequence ID" value="XM_011247202.3"/>
</dbReference>
<dbReference type="RefSeq" id="XP_011245505.1">
    <molecule id="Q8VCQ6-1"/>
    <property type="nucleotide sequence ID" value="XM_011247203.3"/>
</dbReference>
<dbReference type="RefSeq" id="XP_017173594.1">
    <molecule id="Q8VCQ6-3"/>
    <property type="nucleotide sequence ID" value="XM_017318105.3"/>
</dbReference>
<dbReference type="RefSeq" id="XP_030106691.1">
    <molecule id="Q8VCQ6-1"/>
    <property type="nucleotide sequence ID" value="XM_030250831.2"/>
</dbReference>
<dbReference type="RefSeq" id="XP_030106692.1">
    <molecule id="Q8VCQ6-1"/>
    <property type="nucleotide sequence ID" value="XM_030250832.1"/>
</dbReference>
<dbReference type="RefSeq" id="XP_030106693.1">
    <molecule id="Q8VCQ6-1"/>
    <property type="nucleotide sequence ID" value="XM_030250833.2"/>
</dbReference>
<dbReference type="RefSeq" id="XP_030106695.1">
    <molecule id="Q8VCQ6-1"/>
    <property type="nucleotide sequence ID" value="XM_030250835.1"/>
</dbReference>
<dbReference type="RefSeq" id="XP_030106696.1">
    <molecule id="Q8VCQ6-1"/>
    <property type="nucleotide sequence ID" value="XM_030250836.2"/>
</dbReference>
<dbReference type="RefSeq" id="XP_030106697.1">
    <molecule id="Q8VCQ6-1"/>
    <property type="nucleotide sequence ID" value="XM_030250837.1"/>
</dbReference>
<dbReference type="PDB" id="2D8C">
    <property type="method" value="NMR"/>
    <property type="chains" value="A=1-84"/>
</dbReference>
<dbReference type="PDBsum" id="2D8C"/>
<dbReference type="SMR" id="Q8VCQ6"/>
<dbReference type="BioGRID" id="228984">
    <property type="interactions" value="2"/>
</dbReference>
<dbReference type="FunCoup" id="Q8VCQ6">
    <property type="interactions" value="2509"/>
</dbReference>
<dbReference type="STRING" id="10090.ENSMUSP00000117336"/>
<dbReference type="BindingDB" id="Q8VCQ6"/>
<dbReference type="ChEMBL" id="CHEMBL4523408"/>
<dbReference type="PhosphoSitePlus" id="Q8VCQ6"/>
<dbReference type="PaxDb" id="10090-ENSMUSP00000117336"/>
<dbReference type="ProteomicsDB" id="261459">
    <molecule id="Q8VCQ6-1"/>
</dbReference>
<dbReference type="ProteomicsDB" id="261460">
    <molecule id="Q8VCQ6-2"/>
</dbReference>
<dbReference type="ProteomicsDB" id="261461">
    <molecule id="Q8VCQ6-3"/>
</dbReference>
<dbReference type="Antibodypedia" id="27870">
    <property type="antibodies" value="203 antibodies from 25 providers"/>
</dbReference>
<dbReference type="DNASU" id="208449"/>
<dbReference type="Ensembl" id="ENSMUST00000099514.10">
    <molecule id="Q8VCQ6-1"/>
    <property type="protein sequence ID" value="ENSMUSP00000097114.4"/>
    <property type="gene ID" value="ENSMUSG00000040451.19"/>
</dbReference>
<dbReference type="Ensembl" id="ENSMUST00000142618.8">
    <molecule id="Q8VCQ6-1"/>
    <property type="protein sequence ID" value="ENSMUSP00000117336.2"/>
    <property type="gene ID" value="ENSMUSG00000040451.19"/>
</dbReference>
<dbReference type="Ensembl" id="ENSMUST00000151289.9">
    <molecule id="Q8VCQ6-1"/>
    <property type="protein sequence ID" value="ENSMUSP00000123395.2"/>
    <property type="gene ID" value="ENSMUSG00000040451.19"/>
</dbReference>
<dbReference type="Ensembl" id="ENSMUST00000152340.8">
    <molecule id="Q8VCQ6-3"/>
    <property type="protein sequence ID" value="ENSMUSP00000119869.2"/>
    <property type="gene ID" value="ENSMUSG00000040451.19"/>
</dbReference>
<dbReference type="GeneID" id="208449"/>
<dbReference type="KEGG" id="mmu:208449"/>
<dbReference type="UCSC" id="uc008hfc.2">
    <molecule id="Q8VCQ6-1"/>
    <property type="organism name" value="mouse"/>
</dbReference>
<dbReference type="UCSC" id="uc008hfh.1">
    <molecule id="Q8VCQ6-2"/>
    <property type="organism name" value="mouse"/>
</dbReference>
<dbReference type="AGR" id="MGI:2444110"/>
<dbReference type="CTD" id="259230"/>
<dbReference type="MGI" id="MGI:2444110">
    <property type="gene designation" value="Sgms1"/>
</dbReference>
<dbReference type="VEuPathDB" id="HostDB:ENSMUSG00000040451"/>
<dbReference type="eggNOG" id="KOG3058">
    <property type="taxonomic scope" value="Eukaryota"/>
</dbReference>
<dbReference type="GeneTree" id="ENSGT00940000158306"/>
<dbReference type="HOGENOM" id="CLU_027104_1_0_1"/>
<dbReference type="InParanoid" id="Q8VCQ6"/>
<dbReference type="OMA" id="HWPLRCP"/>
<dbReference type="OrthoDB" id="422827at2759"/>
<dbReference type="PhylomeDB" id="Q8VCQ6"/>
<dbReference type="TreeFam" id="TF314547"/>
<dbReference type="BRENDA" id="2.7.8.27">
    <property type="organism ID" value="3474"/>
</dbReference>
<dbReference type="Reactome" id="R-MMU-1660661">
    <property type="pathway name" value="Sphingolipid de novo biosynthesis"/>
</dbReference>
<dbReference type="BioGRID-ORCS" id="208449">
    <property type="hits" value="10 hits in 80 CRISPR screens"/>
</dbReference>
<dbReference type="ChiTaRS" id="Sgms1">
    <property type="organism name" value="mouse"/>
</dbReference>
<dbReference type="EvolutionaryTrace" id="Q8VCQ6"/>
<dbReference type="PRO" id="PR:Q8VCQ6"/>
<dbReference type="Proteomes" id="UP000000589">
    <property type="component" value="Chromosome 19"/>
</dbReference>
<dbReference type="RNAct" id="Q8VCQ6">
    <property type="molecule type" value="protein"/>
</dbReference>
<dbReference type="Bgee" id="ENSMUSG00000040451">
    <property type="expression patterns" value="Expressed in spermatid and 257 other cell types or tissues"/>
</dbReference>
<dbReference type="ExpressionAtlas" id="Q8VCQ6">
    <property type="expression patterns" value="baseline and differential"/>
</dbReference>
<dbReference type="GO" id="GO:0005783">
    <property type="term" value="C:endoplasmic reticulum"/>
    <property type="evidence" value="ECO:0000304"/>
    <property type="project" value="HGNC-UCL"/>
</dbReference>
<dbReference type="GO" id="GO:0000139">
    <property type="term" value="C:Golgi membrane"/>
    <property type="evidence" value="ECO:0000250"/>
    <property type="project" value="UniProtKB"/>
</dbReference>
<dbReference type="GO" id="GO:0000138">
    <property type="term" value="C:Golgi trans cisterna"/>
    <property type="evidence" value="ECO:0000266"/>
    <property type="project" value="MGI"/>
</dbReference>
<dbReference type="GO" id="GO:0005634">
    <property type="term" value="C:nucleus"/>
    <property type="evidence" value="ECO:0000304"/>
    <property type="project" value="HGNC-UCL"/>
</dbReference>
<dbReference type="GO" id="GO:0005886">
    <property type="term" value="C:plasma membrane"/>
    <property type="evidence" value="ECO:0000304"/>
    <property type="project" value="HGNC-UCL"/>
</dbReference>
<dbReference type="GO" id="GO:0047493">
    <property type="term" value="F:ceramide cholinephosphotransferase activity"/>
    <property type="evidence" value="ECO:0000250"/>
    <property type="project" value="UniProtKB"/>
</dbReference>
<dbReference type="GO" id="GO:0002950">
    <property type="term" value="F:ceramide phosphoethanolamine synthase activity"/>
    <property type="evidence" value="ECO:0000315"/>
    <property type="project" value="MGI"/>
</dbReference>
<dbReference type="GO" id="GO:0016301">
    <property type="term" value="F:kinase activity"/>
    <property type="evidence" value="ECO:0007669"/>
    <property type="project" value="UniProtKB-KW"/>
</dbReference>
<dbReference type="GO" id="GO:0033188">
    <property type="term" value="F:sphingomyelin synthase activity"/>
    <property type="evidence" value="ECO:0000314"/>
    <property type="project" value="UniProtKB"/>
</dbReference>
<dbReference type="GO" id="GO:0006915">
    <property type="term" value="P:apoptotic process"/>
    <property type="evidence" value="ECO:0007669"/>
    <property type="project" value="UniProtKB-KW"/>
</dbReference>
<dbReference type="GO" id="GO:0071222">
    <property type="term" value="P:cellular response to lipopolysaccharide"/>
    <property type="evidence" value="ECO:0007669"/>
    <property type="project" value="Ensembl"/>
</dbReference>
<dbReference type="GO" id="GO:0071356">
    <property type="term" value="P:cellular response to tumor necrosis factor"/>
    <property type="evidence" value="ECO:0007669"/>
    <property type="project" value="Ensembl"/>
</dbReference>
<dbReference type="GO" id="GO:0046513">
    <property type="term" value="P:ceramide biosynthetic process"/>
    <property type="evidence" value="ECO:0000315"/>
    <property type="project" value="MGI"/>
</dbReference>
<dbReference type="GO" id="GO:2001237">
    <property type="term" value="P:negative regulation of extrinsic apoptotic signaling pathway"/>
    <property type="evidence" value="ECO:0000314"/>
    <property type="project" value="MGI"/>
</dbReference>
<dbReference type="GO" id="GO:0010628">
    <property type="term" value="P:positive regulation of gene expression"/>
    <property type="evidence" value="ECO:0007669"/>
    <property type="project" value="Ensembl"/>
</dbReference>
<dbReference type="GO" id="GO:0006686">
    <property type="term" value="P:sphingomyelin biosynthetic process"/>
    <property type="evidence" value="ECO:0000315"/>
    <property type="project" value="UniProtKB"/>
</dbReference>
<dbReference type="CDD" id="cd01610">
    <property type="entry name" value="PAP2_like"/>
    <property type="match status" value="1"/>
</dbReference>
<dbReference type="CDD" id="cd09514">
    <property type="entry name" value="SAM_SGMS1"/>
    <property type="match status" value="1"/>
</dbReference>
<dbReference type="FunFam" id="1.10.150.50:FF:000040">
    <property type="entry name" value="Phosphatidylcholine:ceramide cholinephosphotransferase 1"/>
    <property type="match status" value="1"/>
</dbReference>
<dbReference type="Gene3D" id="1.10.150.50">
    <property type="entry name" value="Transcription Factor, Ets-1"/>
    <property type="match status" value="1"/>
</dbReference>
<dbReference type="InterPro" id="IPR001660">
    <property type="entry name" value="SAM"/>
</dbReference>
<dbReference type="InterPro" id="IPR013761">
    <property type="entry name" value="SAM/pointed_sf"/>
</dbReference>
<dbReference type="InterPro" id="IPR045221">
    <property type="entry name" value="Sphingomyelin_synth-like"/>
</dbReference>
<dbReference type="InterPro" id="IPR025749">
    <property type="entry name" value="Sphingomyelin_synth-like_dom"/>
</dbReference>
<dbReference type="PANTHER" id="PTHR21290:SF28">
    <property type="entry name" value="PHOSPHATIDYLCHOLINE:CERAMIDE CHOLINEPHOSPHOTRANSFERASE 1"/>
    <property type="match status" value="1"/>
</dbReference>
<dbReference type="PANTHER" id="PTHR21290">
    <property type="entry name" value="SPHINGOMYELIN SYNTHETASE"/>
    <property type="match status" value="1"/>
</dbReference>
<dbReference type="Pfam" id="PF14360">
    <property type="entry name" value="PAP2_C"/>
    <property type="match status" value="1"/>
</dbReference>
<dbReference type="SUPFAM" id="SSF47769">
    <property type="entry name" value="SAM/Pointed domain"/>
    <property type="match status" value="1"/>
</dbReference>
<dbReference type="PROSITE" id="PS50105">
    <property type="entry name" value="SAM_DOMAIN"/>
    <property type="match status" value="1"/>
</dbReference>
<keyword id="KW-0002">3D-structure</keyword>
<keyword id="KW-0025">Alternative splicing</keyword>
<keyword id="KW-0053">Apoptosis</keyword>
<keyword id="KW-0333">Golgi apparatus</keyword>
<keyword id="KW-0418">Kinase</keyword>
<keyword id="KW-0443">Lipid metabolism</keyword>
<keyword id="KW-0472">Membrane</keyword>
<keyword id="KW-0597">Phosphoprotein</keyword>
<keyword id="KW-1185">Reference proteome</keyword>
<keyword id="KW-0746">Sphingolipid metabolism</keyword>
<keyword id="KW-0808">Transferase</keyword>
<keyword id="KW-0812">Transmembrane</keyword>
<keyword id="KW-1133">Transmembrane helix</keyword>
<protein>
    <recommendedName>
        <fullName>Phosphatidylcholine:ceramide cholinephosphotransferase 1</fullName>
        <ecNumber evidence="10">2.7.8.27</ecNumber>
    </recommendedName>
    <alternativeName>
        <fullName>Protein Mob</fullName>
    </alternativeName>
    <alternativeName>
        <fullName>Sphingomyelin synthase 1</fullName>
    </alternativeName>
    <alternativeName>
        <fullName>Transmembrane protein 23</fullName>
    </alternativeName>
</protein>
<accession>Q8VCQ6</accession>
<accession>Q3UIS8</accession>
<accession>Q5J3R0</accession>
<accession>Q8C464</accession>
<accession>Q8C583</accession>
<accession>Q8C652</accession>
<organism>
    <name type="scientific">Mus musculus</name>
    <name type="common">Mouse</name>
    <dbReference type="NCBI Taxonomy" id="10090"/>
    <lineage>
        <taxon>Eukaryota</taxon>
        <taxon>Metazoa</taxon>
        <taxon>Chordata</taxon>
        <taxon>Craniata</taxon>
        <taxon>Vertebrata</taxon>
        <taxon>Euteleostomi</taxon>
        <taxon>Mammalia</taxon>
        <taxon>Eutheria</taxon>
        <taxon>Euarchontoglires</taxon>
        <taxon>Glires</taxon>
        <taxon>Rodentia</taxon>
        <taxon>Myomorpha</taxon>
        <taxon>Muroidea</taxon>
        <taxon>Muridae</taxon>
        <taxon>Murinae</taxon>
        <taxon>Mus</taxon>
        <taxon>Mus</taxon>
    </lineage>
</organism>
<sequence>MLSARTMKEVVYWSPKKVADWLLENAMPEYCEPLEHFTGQDLINLTQEDFKKPPLYRVSSDNGQRLLDMIETLKMEHHMEAHKNGHANGHLSIGVDIPNPDGSFSIKTKPNGMPNGFRKEMIKIPMPEPERSQYPMEWGKTFLAFLYALSCFVLTTVMISVVHERVPPKEVQPPLPDTFFDHFNRVQWAFSICEINGMILVGLWLFQWLLLKYKSIISRRFFCIVGTLYLYRCITMYVTTLPVPGMHFNCSPKLFGDWEAQVRRIMKLIAGGGLSITGSHNMCGDYLYSGHTVMLTLTYLFIKEYSPRRLWWYHWICWLLSVVGIFCILLAHDHYTVDVVVAYYITTRLFWWYHTMANQQVLKEASQMNLLARVWWYRPFQYFEKNVQGIVPRSYHWPFPWPVVHLSRQVKYSRLVNDT</sequence>
<reference key="1">
    <citation type="journal article" date="2005" name="Gene">
        <title>The mouse sphingomyelin synthase 1 (SMS1) gene is alternatively spliced to yield multiple transcripts and proteins.</title>
        <authorList>
            <person name="Yang Z."/>
            <person name="Jean-Baptiste G."/>
            <person name="Khoury C."/>
            <person name="Greenwood M.T."/>
        </authorList>
    </citation>
    <scope>NUCLEOTIDE SEQUENCE [MRNA] (ISOFORMS 1; 2 AND 3)</scope>
    <scope>TISSUE SPECIFICITY</scope>
    <scope>INDUCTION</scope>
    <source>
        <strain>BALB/cJ</strain>
    </source>
</reference>
<reference key="2">
    <citation type="journal article" date="2005" name="Science">
        <title>The transcriptional landscape of the mammalian genome.</title>
        <authorList>
            <person name="Carninci P."/>
            <person name="Kasukawa T."/>
            <person name="Katayama S."/>
            <person name="Gough J."/>
            <person name="Frith M.C."/>
            <person name="Maeda N."/>
            <person name="Oyama R."/>
            <person name="Ravasi T."/>
            <person name="Lenhard B."/>
            <person name="Wells C."/>
            <person name="Kodzius R."/>
            <person name="Shimokawa K."/>
            <person name="Bajic V.B."/>
            <person name="Brenner S.E."/>
            <person name="Batalov S."/>
            <person name="Forrest A.R."/>
            <person name="Zavolan M."/>
            <person name="Davis M.J."/>
            <person name="Wilming L.G."/>
            <person name="Aidinis V."/>
            <person name="Allen J.E."/>
            <person name="Ambesi-Impiombato A."/>
            <person name="Apweiler R."/>
            <person name="Aturaliya R.N."/>
            <person name="Bailey T.L."/>
            <person name="Bansal M."/>
            <person name="Baxter L."/>
            <person name="Beisel K.W."/>
            <person name="Bersano T."/>
            <person name="Bono H."/>
            <person name="Chalk A.M."/>
            <person name="Chiu K.P."/>
            <person name="Choudhary V."/>
            <person name="Christoffels A."/>
            <person name="Clutterbuck D.R."/>
            <person name="Crowe M.L."/>
            <person name="Dalla E."/>
            <person name="Dalrymple B.P."/>
            <person name="de Bono B."/>
            <person name="Della Gatta G."/>
            <person name="di Bernardo D."/>
            <person name="Down T."/>
            <person name="Engstrom P."/>
            <person name="Fagiolini M."/>
            <person name="Faulkner G."/>
            <person name="Fletcher C.F."/>
            <person name="Fukushima T."/>
            <person name="Furuno M."/>
            <person name="Futaki S."/>
            <person name="Gariboldi M."/>
            <person name="Georgii-Hemming P."/>
            <person name="Gingeras T.R."/>
            <person name="Gojobori T."/>
            <person name="Green R.E."/>
            <person name="Gustincich S."/>
            <person name="Harbers M."/>
            <person name="Hayashi Y."/>
            <person name="Hensch T.K."/>
            <person name="Hirokawa N."/>
            <person name="Hill D."/>
            <person name="Huminiecki L."/>
            <person name="Iacono M."/>
            <person name="Ikeo K."/>
            <person name="Iwama A."/>
            <person name="Ishikawa T."/>
            <person name="Jakt M."/>
            <person name="Kanapin A."/>
            <person name="Katoh M."/>
            <person name="Kawasawa Y."/>
            <person name="Kelso J."/>
            <person name="Kitamura H."/>
            <person name="Kitano H."/>
            <person name="Kollias G."/>
            <person name="Krishnan S.P."/>
            <person name="Kruger A."/>
            <person name="Kummerfeld S.K."/>
            <person name="Kurochkin I.V."/>
            <person name="Lareau L.F."/>
            <person name="Lazarevic D."/>
            <person name="Lipovich L."/>
            <person name="Liu J."/>
            <person name="Liuni S."/>
            <person name="McWilliam S."/>
            <person name="Madan Babu M."/>
            <person name="Madera M."/>
            <person name="Marchionni L."/>
            <person name="Matsuda H."/>
            <person name="Matsuzawa S."/>
            <person name="Miki H."/>
            <person name="Mignone F."/>
            <person name="Miyake S."/>
            <person name="Morris K."/>
            <person name="Mottagui-Tabar S."/>
            <person name="Mulder N."/>
            <person name="Nakano N."/>
            <person name="Nakauchi H."/>
            <person name="Ng P."/>
            <person name="Nilsson R."/>
            <person name="Nishiguchi S."/>
            <person name="Nishikawa S."/>
            <person name="Nori F."/>
            <person name="Ohara O."/>
            <person name="Okazaki Y."/>
            <person name="Orlando V."/>
            <person name="Pang K.C."/>
            <person name="Pavan W.J."/>
            <person name="Pavesi G."/>
            <person name="Pesole G."/>
            <person name="Petrovsky N."/>
            <person name="Piazza S."/>
            <person name="Reed J."/>
            <person name="Reid J.F."/>
            <person name="Ring B.Z."/>
            <person name="Ringwald M."/>
            <person name="Rost B."/>
            <person name="Ruan Y."/>
            <person name="Salzberg S.L."/>
            <person name="Sandelin A."/>
            <person name="Schneider C."/>
            <person name="Schoenbach C."/>
            <person name="Sekiguchi K."/>
            <person name="Semple C.A."/>
            <person name="Seno S."/>
            <person name="Sessa L."/>
            <person name="Sheng Y."/>
            <person name="Shibata Y."/>
            <person name="Shimada H."/>
            <person name="Shimada K."/>
            <person name="Silva D."/>
            <person name="Sinclair B."/>
            <person name="Sperling S."/>
            <person name="Stupka E."/>
            <person name="Sugiura K."/>
            <person name="Sultana R."/>
            <person name="Takenaka Y."/>
            <person name="Taki K."/>
            <person name="Tammoja K."/>
            <person name="Tan S.L."/>
            <person name="Tang S."/>
            <person name="Taylor M.S."/>
            <person name="Tegner J."/>
            <person name="Teichmann S.A."/>
            <person name="Ueda H.R."/>
            <person name="van Nimwegen E."/>
            <person name="Verardo R."/>
            <person name="Wei C.L."/>
            <person name="Yagi K."/>
            <person name="Yamanishi H."/>
            <person name="Zabarovsky E."/>
            <person name="Zhu S."/>
            <person name="Zimmer A."/>
            <person name="Hide W."/>
            <person name="Bult C."/>
            <person name="Grimmond S.M."/>
            <person name="Teasdale R.D."/>
            <person name="Liu E.T."/>
            <person name="Brusic V."/>
            <person name="Quackenbush J."/>
            <person name="Wahlestedt C."/>
            <person name="Mattick J.S."/>
            <person name="Hume D.A."/>
            <person name="Kai C."/>
            <person name="Sasaki D."/>
            <person name="Tomaru Y."/>
            <person name="Fukuda S."/>
            <person name="Kanamori-Katayama M."/>
            <person name="Suzuki M."/>
            <person name="Aoki J."/>
            <person name="Arakawa T."/>
            <person name="Iida J."/>
            <person name="Imamura K."/>
            <person name="Itoh M."/>
            <person name="Kato T."/>
            <person name="Kawaji H."/>
            <person name="Kawagashira N."/>
            <person name="Kawashima T."/>
            <person name="Kojima M."/>
            <person name="Kondo S."/>
            <person name="Konno H."/>
            <person name="Nakano K."/>
            <person name="Ninomiya N."/>
            <person name="Nishio T."/>
            <person name="Okada M."/>
            <person name="Plessy C."/>
            <person name="Shibata K."/>
            <person name="Shiraki T."/>
            <person name="Suzuki S."/>
            <person name="Tagami M."/>
            <person name="Waki K."/>
            <person name="Watahiki A."/>
            <person name="Okamura-Oho Y."/>
            <person name="Suzuki H."/>
            <person name="Kawai J."/>
            <person name="Hayashizaki Y."/>
        </authorList>
    </citation>
    <scope>NUCLEOTIDE SEQUENCE [LARGE SCALE MRNA] (ISOFORMS 1; 2 AND 3)</scope>
    <source>
        <strain>C57BL/6J</strain>
        <tissue>Bone marrow macrophage</tissue>
        <tissue>Embryo</tissue>
        <tissue>Embryonic heart</tissue>
        <tissue>Embryonic spinal cord</tissue>
        <tissue>Embryonic stem cell</tissue>
        <tissue>Testis</tissue>
        <tissue>Urinary bladder</tissue>
    </source>
</reference>
<reference evidence="13" key="3">
    <citation type="journal article" date="2004" name="Genome Res.">
        <title>The status, quality, and expansion of the NIH full-length cDNA project: the Mammalian Gene Collection (MGC).</title>
        <authorList>
            <consortium name="The MGC Project Team"/>
        </authorList>
    </citation>
    <scope>NUCLEOTIDE SEQUENCE [LARGE SCALE MRNA] (ISOFORM 1)</scope>
    <source>
        <strain>C57BL/6J</strain>
        <strain>FVB/N</strain>
        <tissue evidence="4">Kidney</tissue>
        <tissue>Olfactory epithelium</tissue>
    </source>
</reference>
<reference key="4">
    <citation type="journal article" date="2004" name="EMBO J.">
        <title>Identification of a family of animal sphingomyelin synthases.</title>
        <authorList>
            <person name="Huitema K."/>
            <person name="Van Den Dikkenberg J."/>
            <person name="Brouwers J.F.H.M."/>
            <person name="Holthuis J.C."/>
        </authorList>
    </citation>
    <scope>IDENTIFICATION</scope>
</reference>
<reference key="5">
    <citation type="journal article" date="2006" name="FEMS Yeast Res.">
        <title>Identification of mouse sphingomyelin synthase 1 as a suppressor of Bax-mediated cell death in yeast.</title>
        <authorList>
            <person name="Yang Z."/>
            <person name="Khoury C."/>
            <person name="Jean-Baptiste G."/>
            <person name="Greenwood M.T."/>
        </authorList>
    </citation>
    <scope>FUNCTION</scope>
</reference>
<reference key="6">
    <citation type="journal article" date="2012" name="Arterioscler. Thromb. Vasc. Biol.">
        <title>Impact of sphingomyelin synthase 1 deficiency on sphingolipid metabolism and atherosclerosis in mice.</title>
        <authorList>
            <person name="Li Z."/>
            <person name="Fan Y."/>
            <person name="Liu J."/>
            <person name="Li Y."/>
            <person name="Huan C."/>
            <person name="Bui H.H."/>
            <person name="Kuo M.S."/>
            <person name="Park T.S."/>
            <person name="Cao G."/>
            <person name="Jiang X.C."/>
        </authorList>
    </citation>
    <scope>DISRUPTION PHENOTYPE</scope>
    <scope>FUNCTION</scope>
</reference>
<reference key="7">
    <citation type="journal article" date="2012" name="J. Physiol. (Lond.)">
        <title>Deficiency of sphingomyelin synthase-1 but not sphingomyelin synthase-2 causes hearing impairments in mice.</title>
        <authorList>
            <person name="Lu M.H."/>
            <person name="Takemoto M."/>
            <person name="Watanabe K."/>
            <person name="Luo H."/>
            <person name="Nishimura M."/>
            <person name="Yano M."/>
            <person name="Tomimoto H."/>
            <person name="Okazaki T."/>
            <person name="Oike Y."/>
            <person name="Song W.J."/>
        </authorList>
    </citation>
    <scope>DISRUPTION PHENOTYPE</scope>
</reference>
<reference key="8">
    <citation type="journal article" date="2015" name="J. Lipid Res.">
        <title>All members in the sphingomyelin synthase gene family have ceramide phosphoethanolamine synthase activity.</title>
        <authorList>
            <person name="Ding T."/>
            <person name="Kabir I."/>
            <person name="Li Y."/>
            <person name="Lou C."/>
            <person name="Yazdanyar A."/>
            <person name="Xu J."/>
            <person name="Dong J."/>
            <person name="Zhou H."/>
            <person name="Park T."/>
            <person name="Boutjdir M."/>
            <person name="Li Z."/>
            <person name="Jiang X.C."/>
        </authorList>
    </citation>
    <scope>FUNCTION</scope>
    <scope>CATALYTIC ACTIVITY</scope>
</reference>
<reference key="9">
    <citation type="journal article" date="2016" name="Sci. Rep.">
        <title>Sphingomyelin generated by sphingomyelin synthase 1 is involved in attachment and infection with Japanese encephalitis virus.</title>
        <authorList>
            <person name="Taniguchi M."/>
            <person name="Tasaki T."/>
            <person name="Ninomiya H."/>
            <person name="Ueda Y."/>
            <person name="Kuremoto K.I."/>
            <person name="Mitsutake S."/>
            <person name="Igarashi Y."/>
            <person name="Okazaki T."/>
            <person name="Takegami T."/>
        </authorList>
    </citation>
    <scope>FUNCTION (MICROBIAL INFECTION)</scope>
    <scope>CATALYTIC ACTIVITY</scope>
    <scope>PATHWAY</scope>
</reference>
<reference key="10">
    <citation type="submission" date="2006-06" db="PDB data bank">
        <title>Solution structure of the SAM-domain of mouse phosphatidyl ceramidecholinephosphotransferase 1.</title>
        <authorList>
            <consortium name="RIKEN structural genomics initiative (RSGI)"/>
        </authorList>
    </citation>
    <scope>STRUCTURE BY NMR OF 1-84</scope>
</reference>
<evidence type="ECO:0000250" key="1">
    <source>
        <dbReference type="UniProtKB" id="Q86VZ5"/>
    </source>
</evidence>
<evidence type="ECO:0000255" key="2"/>
<evidence type="ECO:0000255" key="3">
    <source>
        <dbReference type="PROSITE-ProRule" id="PRU00184"/>
    </source>
</evidence>
<evidence type="ECO:0000269" key="4">
    <source>
    </source>
</evidence>
<evidence type="ECO:0000269" key="5">
    <source>
    </source>
</evidence>
<evidence type="ECO:0000269" key="6">
    <source>
    </source>
</evidence>
<evidence type="ECO:0000269" key="7">
    <source>
    </source>
</evidence>
<evidence type="ECO:0000269" key="8">
    <source>
    </source>
</evidence>
<evidence type="ECO:0000269" key="9">
    <source>
    </source>
</evidence>
<evidence type="ECO:0000269" key="10">
    <source>
    </source>
</evidence>
<evidence type="ECO:0000303" key="11">
    <source>
    </source>
</evidence>
<evidence type="ECO:0000303" key="12">
    <source>
    </source>
</evidence>
<evidence type="ECO:0000305" key="13"/>
<evidence type="ECO:0000305" key="14">
    <source>
    </source>
</evidence>
<evidence type="ECO:0007829" key="15">
    <source>
        <dbReference type="PDB" id="2D8C"/>
    </source>
</evidence>
<name>SMS1_MOUSE</name>